<reference key="1">
    <citation type="journal article" date="2007" name="J. Bacteriol.">
        <title>Genome of the opportunistic pathogen Streptococcus sanguinis.</title>
        <authorList>
            <person name="Xu P."/>
            <person name="Alves J.M."/>
            <person name="Kitten T."/>
            <person name="Brown A."/>
            <person name="Chen Z."/>
            <person name="Ozaki L.S."/>
            <person name="Manque P."/>
            <person name="Ge X."/>
            <person name="Serrano M.G."/>
            <person name="Puiu D."/>
            <person name="Hendricks S."/>
            <person name="Wang Y."/>
            <person name="Chaplin M.D."/>
            <person name="Akan D."/>
            <person name="Paik S."/>
            <person name="Peterson D.L."/>
            <person name="Macrina F.L."/>
            <person name="Buck G.A."/>
        </authorList>
    </citation>
    <scope>NUCLEOTIDE SEQUENCE [LARGE SCALE GENOMIC DNA]</scope>
    <source>
        <strain>SK36</strain>
    </source>
</reference>
<protein>
    <recommendedName>
        <fullName evidence="1">tRNA N6-adenosine threonylcarbamoyltransferase</fullName>
        <ecNumber evidence="1">2.3.1.234</ecNumber>
    </recommendedName>
    <alternativeName>
        <fullName evidence="1">N6-L-threonylcarbamoyladenine synthase</fullName>
        <shortName evidence="1">t(6)A synthase</shortName>
    </alternativeName>
    <alternativeName>
        <fullName evidence="1">t(6)A37 threonylcarbamoyladenosine biosynthesis protein TsaD</fullName>
    </alternativeName>
    <alternativeName>
        <fullName evidence="1">tRNA threonylcarbamoyladenosine biosynthesis protein TsaD</fullName>
    </alternativeName>
</protein>
<keyword id="KW-0012">Acyltransferase</keyword>
<keyword id="KW-0963">Cytoplasm</keyword>
<keyword id="KW-0408">Iron</keyword>
<keyword id="KW-0479">Metal-binding</keyword>
<keyword id="KW-1185">Reference proteome</keyword>
<keyword id="KW-0808">Transferase</keyword>
<keyword id="KW-0819">tRNA processing</keyword>
<dbReference type="EC" id="2.3.1.234" evidence="1"/>
<dbReference type="EMBL" id="CP000387">
    <property type="protein sequence ID" value="ABN43775.1"/>
    <property type="molecule type" value="Genomic_DNA"/>
</dbReference>
<dbReference type="RefSeq" id="WP_002896630.1">
    <property type="nucleotide sequence ID" value="NC_009009.1"/>
</dbReference>
<dbReference type="RefSeq" id="YP_001034325.1">
    <property type="nucleotide sequence ID" value="NC_009009.1"/>
</dbReference>
<dbReference type="SMR" id="A3CKS0"/>
<dbReference type="STRING" id="388919.SSA_0318"/>
<dbReference type="KEGG" id="ssa:SSA_0318"/>
<dbReference type="PATRIC" id="fig|388919.9.peg.308"/>
<dbReference type="eggNOG" id="COG0533">
    <property type="taxonomic scope" value="Bacteria"/>
</dbReference>
<dbReference type="HOGENOM" id="CLU_023208_0_1_9"/>
<dbReference type="OrthoDB" id="9806197at2"/>
<dbReference type="Proteomes" id="UP000002148">
    <property type="component" value="Chromosome"/>
</dbReference>
<dbReference type="GO" id="GO:0005737">
    <property type="term" value="C:cytoplasm"/>
    <property type="evidence" value="ECO:0007669"/>
    <property type="project" value="UniProtKB-SubCell"/>
</dbReference>
<dbReference type="GO" id="GO:0005506">
    <property type="term" value="F:iron ion binding"/>
    <property type="evidence" value="ECO:0007669"/>
    <property type="project" value="UniProtKB-UniRule"/>
</dbReference>
<dbReference type="GO" id="GO:0061711">
    <property type="term" value="F:N(6)-L-threonylcarbamoyladenine synthase activity"/>
    <property type="evidence" value="ECO:0007669"/>
    <property type="project" value="UniProtKB-EC"/>
</dbReference>
<dbReference type="GO" id="GO:0002949">
    <property type="term" value="P:tRNA threonylcarbamoyladenosine modification"/>
    <property type="evidence" value="ECO:0007669"/>
    <property type="project" value="UniProtKB-UniRule"/>
</dbReference>
<dbReference type="CDD" id="cd24133">
    <property type="entry name" value="ASKHA_NBD_TsaD_bac"/>
    <property type="match status" value="1"/>
</dbReference>
<dbReference type="FunFam" id="3.30.420.40:FF:000012">
    <property type="entry name" value="tRNA N6-adenosine threonylcarbamoyltransferase"/>
    <property type="match status" value="1"/>
</dbReference>
<dbReference type="FunFam" id="3.30.420.40:FF:000040">
    <property type="entry name" value="tRNA N6-adenosine threonylcarbamoyltransferase"/>
    <property type="match status" value="1"/>
</dbReference>
<dbReference type="Gene3D" id="3.30.420.40">
    <property type="match status" value="2"/>
</dbReference>
<dbReference type="HAMAP" id="MF_01445">
    <property type="entry name" value="TsaD"/>
    <property type="match status" value="1"/>
</dbReference>
<dbReference type="InterPro" id="IPR043129">
    <property type="entry name" value="ATPase_NBD"/>
</dbReference>
<dbReference type="InterPro" id="IPR000905">
    <property type="entry name" value="Gcp-like_dom"/>
</dbReference>
<dbReference type="InterPro" id="IPR017861">
    <property type="entry name" value="KAE1/TsaD"/>
</dbReference>
<dbReference type="InterPro" id="IPR017860">
    <property type="entry name" value="Peptidase_M22_CS"/>
</dbReference>
<dbReference type="InterPro" id="IPR022450">
    <property type="entry name" value="TsaD"/>
</dbReference>
<dbReference type="NCBIfam" id="TIGR00329">
    <property type="entry name" value="gcp_kae1"/>
    <property type="match status" value="1"/>
</dbReference>
<dbReference type="NCBIfam" id="TIGR03723">
    <property type="entry name" value="T6A_TsaD_YgjD"/>
    <property type="match status" value="1"/>
</dbReference>
<dbReference type="PANTHER" id="PTHR11735">
    <property type="entry name" value="TRNA N6-ADENOSINE THREONYLCARBAMOYLTRANSFERASE"/>
    <property type="match status" value="1"/>
</dbReference>
<dbReference type="PANTHER" id="PTHR11735:SF6">
    <property type="entry name" value="TRNA N6-ADENOSINE THREONYLCARBAMOYLTRANSFERASE, MITOCHONDRIAL"/>
    <property type="match status" value="1"/>
</dbReference>
<dbReference type="Pfam" id="PF00814">
    <property type="entry name" value="TsaD"/>
    <property type="match status" value="1"/>
</dbReference>
<dbReference type="PRINTS" id="PR00789">
    <property type="entry name" value="OSIALOPTASE"/>
</dbReference>
<dbReference type="SUPFAM" id="SSF53067">
    <property type="entry name" value="Actin-like ATPase domain"/>
    <property type="match status" value="1"/>
</dbReference>
<dbReference type="PROSITE" id="PS01016">
    <property type="entry name" value="GLYCOPROTEASE"/>
    <property type="match status" value="1"/>
</dbReference>
<name>TSAD_STRSV</name>
<evidence type="ECO:0000255" key="1">
    <source>
        <dbReference type="HAMAP-Rule" id="MF_01445"/>
    </source>
</evidence>
<organism>
    <name type="scientific">Streptococcus sanguinis (strain SK36)</name>
    <dbReference type="NCBI Taxonomy" id="388919"/>
    <lineage>
        <taxon>Bacteria</taxon>
        <taxon>Bacillati</taxon>
        <taxon>Bacillota</taxon>
        <taxon>Bacilli</taxon>
        <taxon>Lactobacillales</taxon>
        <taxon>Streptococcaceae</taxon>
        <taxon>Streptococcus</taxon>
    </lineage>
</organism>
<sequence>MKDRYILAFETSCDETSVAVLKNETELLSNVIASQIESHKRFGGVVPEVASRHHVEVITVCIEEALAEAGISEEQVTAVAVTYGPGLVGALLVGLAAAKSFAWAHDIPLIPVNHMAGHLMAAQSVEPLEFPLLALLVSGGHTELVYVSQAGDYKIVGETRDDAVGEAYDKVGRVMGLTYPAGREIDLLAHEGQDIYDFPRAMIKEDNLEFSFSGLKSAFINLHHNAQQKGEVLSNQDLSASFQAAVMDILMAKTKKALEKYPVKTLVVAGGVAANQGLRERLAAEIQDVKVIIPPLRLCGDNAGMIAYASVSEWNKENFASLDLNAKPSLAFETME</sequence>
<feature type="chain" id="PRO_0000303574" description="tRNA N6-adenosine threonylcarbamoyltransferase">
    <location>
        <begin position="1"/>
        <end position="336"/>
    </location>
</feature>
<feature type="binding site" evidence="1">
    <location>
        <position position="114"/>
    </location>
    <ligand>
        <name>Fe cation</name>
        <dbReference type="ChEBI" id="CHEBI:24875"/>
    </ligand>
</feature>
<feature type="binding site" evidence="1">
    <location>
        <position position="118"/>
    </location>
    <ligand>
        <name>Fe cation</name>
        <dbReference type="ChEBI" id="CHEBI:24875"/>
    </ligand>
</feature>
<feature type="binding site" evidence="1">
    <location>
        <begin position="136"/>
        <end position="140"/>
    </location>
    <ligand>
        <name>substrate</name>
    </ligand>
</feature>
<feature type="binding site" evidence="1">
    <location>
        <position position="169"/>
    </location>
    <ligand>
        <name>substrate</name>
    </ligand>
</feature>
<feature type="binding site" evidence="1">
    <location>
        <position position="182"/>
    </location>
    <ligand>
        <name>substrate</name>
    </ligand>
</feature>
<feature type="binding site" evidence="1">
    <location>
        <position position="186"/>
    </location>
    <ligand>
        <name>substrate</name>
    </ligand>
</feature>
<feature type="binding site" evidence="1">
    <location>
        <position position="275"/>
    </location>
    <ligand>
        <name>substrate</name>
    </ligand>
</feature>
<feature type="binding site" evidence="1">
    <location>
        <position position="301"/>
    </location>
    <ligand>
        <name>Fe cation</name>
        <dbReference type="ChEBI" id="CHEBI:24875"/>
    </ligand>
</feature>
<proteinExistence type="inferred from homology"/>
<gene>
    <name evidence="1" type="primary">tsaD</name>
    <name type="synonym">gcp</name>
    <name type="ordered locus">SSA_0318</name>
</gene>
<accession>A3CKS0</accession>
<comment type="function">
    <text evidence="1">Required for the formation of a threonylcarbamoyl group on adenosine at position 37 (t(6)A37) in tRNAs that read codons beginning with adenine. Is involved in the transfer of the threonylcarbamoyl moiety of threonylcarbamoyl-AMP (TC-AMP) to the N6 group of A37, together with TsaE and TsaB. TsaD likely plays a direct catalytic role in this reaction.</text>
</comment>
<comment type="catalytic activity">
    <reaction evidence="1">
        <text>L-threonylcarbamoyladenylate + adenosine(37) in tRNA = N(6)-L-threonylcarbamoyladenosine(37) in tRNA + AMP + H(+)</text>
        <dbReference type="Rhea" id="RHEA:37059"/>
        <dbReference type="Rhea" id="RHEA-COMP:10162"/>
        <dbReference type="Rhea" id="RHEA-COMP:10163"/>
        <dbReference type="ChEBI" id="CHEBI:15378"/>
        <dbReference type="ChEBI" id="CHEBI:73682"/>
        <dbReference type="ChEBI" id="CHEBI:74411"/>
        <dbReference type="ChEBI" id="CHEBI:74418"/>
        <dbReference type="ChEBI" id="CHEBI:456215"/>
        <dbReference type="EC" id="2.3.1.234"/>
    </reaction>
</comment>
<comment type="cofactor">
    <cofactor evidence="1">
        <name>Fe(2+)</name>
        <dbReference type="ChEBI" id="CHEBI:29033"/>
    </cofactor>
    <text evidence="1">Binds 1 Fe(2+) ion per subunit.</text>
</comment>
<comment type="subcellular location">
    <subcellularLocation>
        <location evidence="1">Cytoplasm</location>
    </subcellularLocation>
</comment>
<comment type="similarity">
    <text evidence="1">Belongs to the KAE1 / TsaD family.</text>
</comment>